<gene>
    <name evidence="1" type="primary">psbL</name>
</gene>
<protein>
    <recommendedName>
        <fullName evidence="1">Photosystem II reaction center protein L</fullName>
        <shortName evidence="1">PSII-L</shortName>
    </recommendedName>
</protein>
<feature type="chain" id="PRO_0000219681" description="Photosystem II reaction center protein L">
    <location>
        <begin position="1"/>
        <end position="38"/>
    </location>
</feature>
<feature type="transmembrane region" description="Helical" evidence="1">
    <location>
        <begin position="17"/>
        <end position="37"/>
    </location>
</feature>
<reference key="1">
    <citation type="journal article" date="2000" name="Am. J. Bot.">
        <title>Utility of 17 chloroplast genes for inferring the phylogeny of the basal angiosperms.</title>
        <authorList>
            <person name="Graham S.W."/>
            <person name="Olmstead R.G."/>
        </authorList>
    </citation>
    <scope>NUCLEOTIDE SEQUENCE [GENOMIC DNA]</scope>
</reference>
<dbReference type="EMBL" id="AF123829">
    <property type="protein sequence ID" value="AAG26196.1"/>
    <property type="molecule type" value="Genomic_DNA"/>
</dbReference>
<dbReference type="SMR" id="Q7J1C3"/>
<dbReference type="GO" id="GO:0009535">
    <property type="term" value="C:chloroplast thylakoid membrane"/>
    <property type="evidence" value="ECO:0007669"/>
    <property type="project" value="UniProtKB-SubCell"/>
</dbReference>
<dbReference type="GO" id="GO:0009539">
    <property type="term" value="C:photosystem II reaction center"/>
    <property type="evidence" value="ECO:0007669"/>
    <property type="project" value="InterPro"/>
</dbReference>
<dbReference type="GO" id="GO:0015979">
    <property type="term" value="P:photosynthesis"/>
    <property type="evidence" value="ECO:0007669"/>
    <property type="project" value="UniProtKB-UniRule"/>
</dbReference>
<dbReference type="HAMAP" id="MF_01317">
    <property type="entry name" value="PSII_PsbL"/>
    <property type="match status" value="1"/>
</dbReference>
<dbReference type="InterPro" id="IPR003372">
    <property type="entry name" value="PSII_PsbL"/>
</dbReference>
<dbReference type="InterPro" id="IPR037266">
    <property type="entry name" value="PSII_PsbL_sf"/>
</dbReference>
<dbReference type="NCBIfam" id="NF001972">
    <property type="entry name" value="PRK00753.1"/>
    <property type="match status" value="1"/>
</dbReference>
<dbReference type="Pfam" id="PF02419">
    <property type="entry name" value="PsbL"/>
    <property type="match status" value="1"/>
</dbReference>
<dbReference type="SUPFAM" id="SSF161017">
    <property type="entry name" value="Photosystem II reaction center protein L, PsbL"/>
    <property type="match status" value="1"/>
</dbReference>
<organism>
    <name type="scientific">Asarum canadense</name>
    <name type="common">Wild ginger</name>
    <dbReference type="NCBI Taxonomy" id="28498"/>
    <lineage>
        <taxon>Eukaryota</taxon>
        <taxon>Viridiplantae</taxon>
        <taxon>Streptophyta</taxon>
        <taxon>Embryophyta</taxon>
        <taxon>Tracheophyta</taxon>
        <taxon>Spermatophyta</taxon>
        <taxon>Magnoliopsida</taxon>
        <taxon>Magnoliidae</taxon>
        <taxon>Piperales</taxon>
        <taxon>Asaraceae</taxon>
        <taxon>Asarum</taxon>
    </lineage>
</organism>
<sequence length="38" mass="4497">MTQSNPNEQNVELNRTSLYWGLLLIFVLAVLFSNYFFN</sequence>
<proteinExistence type="inferred from homology"/>
<evidence type="ECO:0000255" key="1">
    <source>
        <dbReference type="HAMAP-Rule" id="MF_01317"/>
    </source>
</evidence>
<comment type="function">
    <text evidence="1">One of the components of the core complex of photosystem II (PSII). PSII is a light-driven water:plastoquinone oxidoreductase that uses light energy to abstract electrons from H(2)O, generating O(2) and a proton gradient subsequently used for ATP formation. It consists of a core antenna complex that captures photons, and an electron transfer chain that converts photonic excitation into a charge separation. This subunit is found at the monomer-monomer interface and is required for correct PSII assembly and/or dimerization.</text>
</comment>
<comment type="subunit">
    <text evidence="1">PSII is composed of 1 copy each of membrane proteins PsbA, PsbB, PsbC, PsbD, PsbE, PsbF, PsbH, PsbI, PsbJ, PsbK, PsbL, PsbM, PsbT, PsbX, PsbY, PsbZ, Psb30/Ycf12, at least 3 peripheral proteins of the oxygen-evolving complex and a large number of cofactors. It forms dimeric complexes.</text>
</comment>
<comment type="subcellular location">
    <subcellularLocation>
        <location evidence="1">Plastid</location>
        <location evidence="1">Chloroplast thylakoid membrane</location>
        <topology evidence="1">Single-pass membrane protein</topology>
    </subcellularLocation>
</comment>
<comment type="similarity">
    <text evidence="1">Belongs to the PsbL family.</text>
</comment>
<keyword id="KW-0150">Chloroplast</keyword>
<keyword id="KW-0472">Membrane</keyword>
<keyword id="KW-0602">Photosynthesis</keyword>
<keyword id="KW-0604">Photosystem II</keyword>
<keyword id="KW-0934">Plastid</keyword>
<keyword id="KW-0674">Reaction center</keyword>
<keyword id="KW-0793">Thylakoid</keyword>
<keyword id="KW-0812">Transmembrane</keyword>
<keyword id="KW-1133">Transmembrane helix</keyword>
<name>PSBL_ASACA</name>
<geneLocation type="chloroplast"/>
<accession>Q7J1C3</accession>